<feature type="chain" id="PRO_0000188875" description="tRNA modification GTPase MnmE">
    <location>
        <begin position="1"/>
        <end position="454"/>
    </location>
</feature>
<feature type="domain" description="TrmE-type G">
    <location>
        <begin position="216"/>
        <end position="377"/>
    </location>
</feature>
<feature type="binding site" evidence="1">
    <location>
        <position position="23"/>
    </location>
    <ligand>
        <name>(6S)-5-formyl-5,6,7,8-tetrahydrofolate</name>
        <dbReference type="ChEBI" id="CHEBI:57457"/>
    </ligand>
</feature>
<feature type="binding site" evidence="1">
    <location>
        <position position="80"/>
    </location>
    <ligand>
        <name>(6S)-5-formyl-5,6,7,8-tetrahydrofolate</name>
        <dbReference type="ChEBI" id="CHEBI:57457"/>
    </ligand>
</feature>
<feature type="binding site" evidence="1">
    <location>
        <position position="120"/>
    </location>
    <ligand>
        <name>(6S)-5-formyl-5,6,7,8-tetrahydrofolate</name>
        <dbReference type="ChEBI" id="CHEBI:57457"/>
    </ligand>
</feature>
<feature type="binding site" evidence="1">
    <location>
        <begin position="226"/>
        <end position="231"/>
    </location>
    <ligand>
        <name>GTP</name>
        <dbReference type="ChEBI" id="CHEBI:37565"/>
    </ligand>
</feature>
<feature type="binding site" evidence="1">
    <location>
        <position position="226"/>
    </location>
    <ligand>
        <name>K(+)</name>
        <dbReference type="ChEBI" id="CHEBI:29103"/>
    </ligand>
</feature>
<feature type="binding site" evidence="1">
    <location>
        <position position="230"/>
    </location>
    <ligand>
        <name>Mg(2+)</name>
        <dbReference type="ChEBI" id="CHEBI:18420"/>
    </ligand>
</feature>
<feature type="binding site" evidence="1">
    <location>
        <begin position="245"/>
        <end position="251"/>
    </location>
    <ligand>
        <name>GTP</name>
        <dbReference type="ChEBI" id="CHEBI:37565"/>
    </ligand>
</feature>
<feature type="binding site" evidence="1">
    <location>
        <position position="245"/>
    </location>
    <ligand>
        <name>K(+)</name>
        <dbReference type="ChEBI" id="CHEBI:29103"/>
    </ligand>
</feature>
<feature type="binding site" evidence="1">
    <location>
        <position position="247"/>
    </location>
    <ligand>
        <name>K(+)</name>
        <dbReference type="ChEBI" id="CHEBI:29103"/>
    </ligand>
</feature>
<feature type="binding site" evidence="1">
    <location>
        <position position="250"/>
    </location>
    <ligand>
        <name>K(+)</name>
        <dbReference type="ChEBI" id="CHEBI:29103"/>
    </ligand>
</feature>
<feature type="binding site" evidence="1">
    <location>
        <position position="251"/>
    </location>
    <ligand>
        <name>Mg(2+)</name>
        <dbReference type="ChEBI" id="CHEBI:18420"/>
    </ligand>
</feature>
<feature type="binding site" evidence="1">
    <location>
        <begin position="270"/>
        <end position="273"/>
    </location>
    <ligand>
        <name>GTP</name>
        <dbReference type="ChEBI" id="CHEBI:37565"/>
    </ligand>
</feature>
<feature type="binding site" evidence="1">
    <location>
        <begin position="335"/>
        <end position="338"/>
    </location>
    <ligand>
        <name>GTP</name>
        <dbReference type="ChEBI" id="CHEBI:37565"/>
    </ligand>
</feature>
<feature type="binding site" evidence="1">
    <location>
        <begin position="358"/>
        <end position="360"/>
    </location>
    <ligand>
        <name>GTP</name>
        <dbReference type="ChEBI" id="CHEBI:37565"/>
    </ligand>
</feature>
<feature type="binding site" evidence="1">
    <location>
        <position position="454"/>
    </location>
    <ligand>
        <name>(6S)-5-formyl-5,6,7,8-tetrahydrofolate</name>
        <dbReference type="ChEBI" id="CHEBI:57457"/>
    </ligand>
</feature>
<sequence length="454" mass="49196">MSDNDTIVAQATPPGRGGVGILRISGLKAREVAETVLGKLPKPRYADYLPFKDADGSVLDQGIALWFPGPNSFTGEDVLELQGHGGPVILDLLLKRILTIPGLRIARPGEFSERAFLNDKLDLAQAEAIADLIDASSEQAARSALNSLQGAFSARVNHLVEALTHLRIYVEAAIDFPDEEIDFLSDGKIEAQLNNVIADLDAVRAEARQGSLLREGMKVVIAGRPNAGKSSLLNALAGREAAIVTDIAGTTRDVLREHIHIDGMPLHIIDTAGLREASDEVERIGIERAWQEIEQADRVLFMVDGTTTDAVDPAEIWPEFIARLPAKLPITVVRNKADITGETLGMSEVNGHALIRLSARTGEGVDVLRNHLKQSMGFDTNMEGGFLARRRHLQALEQAAEHLQQGKAQLLGAWAGELLAEELRLAQQNLSEITGEFTSDDLLGRIFSSFCIGK</sequence>
<accession>Q8FBV3</accession>
<proteinExistence type="inferred from homology"/>
<keyword id="KW-0963">Cytoplasm</keyword>
<keyword id="KW-0342">GTP-binding</keyword>
<keyword id="KW-0378">Hydrolase</keyword>
<keyword id="KW-0460">Magnesium</keyword>
<keyword id="KW-0479">Metal-binding</keyword>
<keyword id="KW-0547">Nucleotide-binding</keyword>
<keyword id="KW-0630">Potassium</keyword>
<keyword id="KW-1185">Reference proteome</keyword>
<keyword id="KW-0819">tRNA processing</keyword>
<reference key="1">
    <citation type="journal article" date="2002" name="Proc. Natl. Acad. Sci. U.S.A.">
        <title>Extensive mosaic structure revealed by the complete genome sequence of uropathogenic Escherichia coli.</title>
        <authorList>
            <person name="Welch R.A."/>
            <person name="Burland V."/>
            <person name="Plunkett G. III"/>
            <person name="Redford P."/>
            <person name="Roesch P."/>
            <person name="Rasko D."/>
            <person name="Buckles E.L."/>
            <person name="Liou S.-R."/>
            <person name="Boutin A."/>
            <person name="Hackett J."/>
            <person name="Stroud D."/>
            <person name="Mayhew G.F."/>
            <person name="Rose D.J."/>
            <person name="Zhou S."/>
            <person name="Schwartz D.C."/>
            <person name="Perna N.T."/>
            <person name="Mobley H.L.T."/>
            <person name="Donnenberg M.S."/>
            <person name="Blattner F.R."/>
        </authorList>
    </citation>
    <scope>NUCLEOTIDE SEQUENCE [LARGE SCALE GENOMIC DNA]</scope>
    <source>
        <strain>CFT073 / ATCC 700928 / UPEC</strain>
    </source>
</reference>
<protein>
    <recommendedName>
        <fullName evidence="1">tRNA modification GTPase MnmE</fullName>
        <ecNumber evidence="1">3.6.-.-</ecNumber>
    </recommendedName>
</protein>
<evidence type="ECO:0000255" key="1">
    <source>
        <dbReference type="HAMAP-Rule" id="MF_00379"/>
    </source>
</evidence>
<name>MNME_ECOL6</name>
<organism>
    <name type="scientific">Escherichia coli O6:H1 (strain CFT073 / ATCC 700928 / UPEC)</name>
    <dbReference type="NCBI Taxonomy" id="199310"/>
    <lineage>
        <taxon>Bacteria</taxon>
        <taxon>Pseudomonadati</taxon>
        <taxon>Pseudomonadota</taxon>
        <taxon>Gammaproteobacteria</taxon>
        <taxon>Enterobacterales</taxon>
        <taxon>Enterobacteriaceae</taxon>
        <taxon>Escherichia</taxon>
    </lineage>
</organism>
<dbReference type="EC" id="3.6.-.-" evidence="1"/>
<dbReference type="EMBL" id="AE014075">
    <property type="protein sequence ID" value="AAN83061.1"/>
    <property type="molecule type" value="Genomic_DNA"/>
</dbReference>
<dbReference type="RefSeq" id="WP_001282368.1">
    <property type="nucleotide sequence ID" value="NZ_CP051263.1"/>
</dbReference>
<dbReference type="SMR" id="Q8FBV3"/>
<dbReference type="STRING" id="199310.c4630"/>
<dbReference type="KEGG" id="ecc:c4630"/>
<dbReference type="eggNOG" id="COG0486">
    <property type="taxonomic scope" value="Bacteria"/>
</dbReference>
<dbReference type="HOGENOM" id="CLU_019624_4_1_6"/>
<dbReference type="BioCyc" id="ECOL199310:C4630-MONOMER"/>
<dbReference type="Proteomes" id="UP000001410">
    <property type="component" value="Chromosome"/>
</dbReference>
<dbReference type="GO" id="GO:0005829">
    <property type="term" value="C:cytosol"/>
    <property type="evidence" value="ECO:0007669"/>
    <property type="project" value="TreeGrafter"/>
</dbReference>
<dbReference type="GO" id="GO:0005525">
    <property type="term" value="F:GTP binding"/>
    <property type="evidence" value="ECO:0007669"/>
    <property type="project" value="UniProtKB-UniRule"/>
</dbReference>
<dbReference type="GO" id="GO:0003924">
    <property type="term" value="F:GTPase activity"/>
    <property type="evidence" value="ECO:0007669"/>
    <property type="project" value="UniProtKB-UniRule"/>
</dbReference>
<dbReference type="GO" id="GO:0046872">
    <property type="term" value="F:metal ion binding"/>
    <property type="evidence" value="ECO:0007669"/>
    <property type="project" value="UniProtKB-KW"/>
</dbReference>
<dbReference type="GO" id="GO:0030488">
    <property type="term" value="P:tRNA methylation"/>
    <property type="evidence" value="ECO:0007669"/>
    <property type="project" value="TreeGrafter"/>
</dbReference>
<dbReference type="GO" id="GO:0002098">
    <property type="term" value="P:tRNA wobble uridine modification"/>
    <property type="evidence" value="ECO:0007669"/>
    <property type="project" value="TreeGrafter"/>
</dbReference>
<dbReference type="CDD" id="cd04164">
    <property type="entry name" value="trmE"/>
    <property type="match status" value="1"/>
</dbReference>
<dbReference type="CDD" id="cd14858">
    <property type="entry name" value="TrmE_N"/>
    <property type="match status" value="1"/>
</dbReference>
<dbReference type="FunFam" id="3.30.1360.120:FF:000001">
    <property type="entry name" value="tRNA modification GTPase MnmE"/>
    <property type="match status" value="1"/>
</dbReference>
<dbReference type="FunFam" id="3.40.50.300:FF:000249">
    <property type="entry name" value="tRNA modification GTPase MnmE"/>
    <property type="match status" value="1"/>
</dbReference>
<dbReference type="Gene3D" id="3.40.50.300">
    <property type="entry name" value="P-loop containing nucleotide triphosphate hydrolases"/>
    <property type="match status" value="1"/>
</dbReference>
<dbReference type="Gene3D" id="3.30.1360.120">
    <property type="entry name" value="Probable tRNA modification gtpase trme, domain 1"/>
    <property type="match status" value="1"/>
</dbReference>
<dbReference type="Gene3D" id="1.20.120.430">
    <property type="entry name" value="tRNA modification GTPase MnmE domain 2"/>
    <property type="match status" value="1"/>
</dbReference>
<dbReference type="HAMAP" id="MF_00379">
    <property type="entry name" value="GTPase_MnmE"/>
    <property type="match status" value="1"/>
</dbReference>
<dbReference type="InterPro" id="IPR031168">
    <property type="entry name" value="G_TrmE"/>
</dbReference>
<dbReference type="InterPro" id="IPR006073">
    <property type="entry name" value="GTP-bd"/>
</dbReference>
<dbReference type="InterPro" id="IPR018948">
    <property type="entry name" value="GTP-bd_TrmE_N"/>
</dbReference>
<dbReference type="InterPro" id="IPR004520">
    <property type="entry name" value="GTPase_MnmE"/>
</dbReference>
<dbReference type="InterPro" id="IPR027368">
    <property type="entry name" value="MnmE_dom2"/>
</dbReference>
<dbReference type="InterPro" id="IPR025867">
    <property type="entry name" value="MnmE_helical"/>
</dbReference>
<dbReference type="InterPro" id="IPR027417">
    <property type="entry name" value="P-loop_NTPase"/>
</dbReference>
<dbReference type="InterPro" id="IPR005225">
    <property type="entry name" value="Small_GTP-bd"/>
</dbReference>
<dbReference type="InterPro" id="IPR027266">
    <property type="entry name" value="TrmE/GcvT_dom1"/>
</dbReference>
<dbReference type="NCBIfam" id="TIGR00450">
    <property type="entry name" value="mnmE_trmE_thdF"/>
    <property type="match status" value="1"/>
</dbReference>
<dbReference type="NCBIfam" id="NF003661">
    <property type="entry name" value="PRK05291.1-3"/>
    <property type="match status" value="1"/>
</dbReference>
<dbReference type="NCBIfam" id="TIGR00231">
    <property type="entry name" value="small_GTP"/>
    <property type="match status" value="1"/>
</dbReference>
<dbReference type="PANTHER" id="PTHR42714">
    <property type="entry name" value="TRNA MODIFICATION GTPASE GTPBP3"/>
    <property type="match status" value="1"/>
</dbReference>
<dbReference type="PANTHER" id="PTHR42714:SF2">
    <property type="entry name" value="TRNA MODIFICATION GTPASE GTPBP3, MITOCHONDRIAL"/>
    <property type="match status" value="1"/>
</dbReference>
<dbReference type="Pfam" id="PF01926">
    <property type="entry name" value="MMR_HSR1"/>
    <property type="match status" value="1"/>
</dbReference>
<dbReference type="Pfam" id="PF12631">
    <property type="entry name" value="MnmE_helical"/>
    <property type="match status" value="1"/>
</dbReference>
<dbReference type="Pfam" id="PF10396">
    <property type="entry name" value="TrmE_N"/>
    <property type="match status" value="1"/>
</dbReference>
<dbReference type="SUPFAM" id="SSF52540">
    <property type="entry name" value="P-loop containing nucleoside triphosphate hydrolases"/>
    <property type="match status" value="1"/>
</dbReference>
<dbReference type="SUPFAM" id="SSF116878">
    <property type="entry name" value="TrmE connector domain"/>
    <property type="match status" value="1"/>
</dbReference>
<dbReference type="PROSITE" id="PS51709">
    <property type="entry name" value="G_TRME"/>
    <property type="match status" value="1"/>
</dbReference>
<gene>
    <name evidence="1" type="primary">mnmE</name>
    <name evidence="1" type="synonym">thdF</name>
    <name evidence="1" type="synonym">trmE</name>
    <name type="ordered locus">c4630</name>
</gene>
<comment type="function">
    <text evidence="1">Exhibits a very high intrinsic GTPase hydrolysis rate. Involved in the addition of a carboxymethylaminomethyl (cmnm) group at the wobble position (U34) of certain tRNAs, forming tRNA-cmnm(5)s(2)U34.</text>
</comment>
<comment type="cofactor">
    <cofactor evidence="1">
        <name>K(+)</name>
        <dbReference type="ChEBI" id="CHEBI:29103"/>
    </cofactor>
    <text evidence="1">Binds 1 potassium ion per subunit.</text>
</comment>
<comment type="subunit">
    <text evidence="1">Homodimer. Heterotetramer of two MnmE and two MnmG subunits.</text>
</comment>
<comment type="subcellular location">
    <subcellularLocation>
        <location>Cytoplasm</location>
    </subcellularLocation>
</comment>
<comment type="similarity">
    <text evidence="1">Belongs to the TRAFAC class TrmE-Era-EngA-EngB-Septin-like GTPase superfamily. TrmE GTPase family.</text>
</comment>